<feature type="chain" id="PRO_0000189947" description="Phosphate acyltransferase">
    <location>
        <begin position="1"/>
        <end position="330"/>
    </location>
</feature>
<dbReference type="EC" id="2.3.1.274" evidence="1 2"/>
<dbReference type="EMBL" id="AE007317">
    <property type="protein sequence ID" value="AAK98841.1"/>
    <property type="molecule type" value="Genomic_DNA"/>
</dbReference>
<dbReference type="PIR" id="E97876">
    <property type="entry name" value="E97876"/>
</dbReference>
<dbReference type="RefSeq" id="NP_357631.1">
    <property type="nucleotide sequence ID" value="NC_003098.1"/>
</dbReference>
<dbReference type="RefSeq" id="WP_000717456.1">
    <property type="nucleotide sequence ID" value="NC_003098.1"/>
</dbReference>
<dbReference type="SMR" id="Q8DRN3"/>
<dbReference type="STRING" id="171101.spr0037"/>
<dbReference type="SwissLipids" id="SLP:000001797"/>
<dbReference type="KEGG" id="spr:spr0037"/>
<dbReference type="PATRIC" id="fig|171101.6.peg.43"/>
<dbReference type="eggNOG" id="COG0416">
    <property type="taxonomic scope" value="Bacteria"/>
</dbReference>
<dbReference type="HOGENOM" id="CLU_039379_1_1_9"/>
<dbReference type="BioCyc" id="MetaCyc:MONOMER-14086"/>
<dbReference type="BRENDA" id="2.3.1.274">
    <property type="organism ID" value="1960"/>
</dbReference>
<dbReference type="SABIO-RK" id="Q8DRN3"/>
<dbReference type="UniPathway" id="UPA00085"/>
<dbReference type="Proteomes" id="UP000000586">
    <property type="component" value="Chromosome"/>
</dbReference>
<dbReference type="GO" id="GO:0005737">
    <property type="term" value="C:cytoplasm"/>
    <property type="evidence" value="ECO:0007669"/>
    <property type="project" value="UniProtKB-SubCell"/>
</dbReference>
<dbReference type="GO" id="GO:0043811">
    <property type="term" value="F:phosphate:acyl-[acyl carrier protein] acyltransferase activity"/>
    <property type="evidence" value="ECO:0007669"/>
    <property type="project" value="UniProtKB-UniRule"/>
</dbReference>
<dbReference type="GO" id="GO:0006633">
    <property type="term" value="P:fatty acid biosynthetic process"/>
    <property type="evidence" value="ECO:0007669"/>
    <property type="project" value="UniProtKB-UniRule"/>
</dbReference>
<dbReference type="GO" id="GO:0008654">
    <property type="term" value="P:phospholipid biosynthetic process"/>
    <property type="evidence" value="ECO:0007669"/>
    <property type="project" value="UniProtKB-KW"/>
</dbReference>
<dbReference type="Gene3D" id="3.40.718.10">
    <property type="entry name" value="Isopropylmalate Dehydrogenase"/>
    <property type="match status" value="1"/>
</dbReference>
<dbReference type="HAMAP" id="MF_00019">
    <property type="entry name" value="PlsX"/>
    <property type="match status" value="1"/>
</dbReference>
<dbReference type="InterPro" id="IPR003664">
    <property type="entry name" value="FA_synthesis"/>
</dbReference>
<dbReference type="InterPro" id="IPR012281">
    <property type="entry name" value="Phospholipid_synth_PlsX-like"/>
</dbReference>
<dbReference type="NCBIfam" id="TIGR00182">
    <property type="entry name" value="plsX"/>
    <property type="match status" value="1"/>
</dbReference>
<dbReference type="PANTHER" id="PTHR30100">
    <property type="entry name" value="FATTY ACID/PHOSPHOLIPID SYNTHESIS PROTEIN PLSX"/>
    <property type="match status" value="1"/>
</dbReference>
<dbReference type="PANTHER" id="PTHR30100:SF1">
    <property type="entry name" value="PHOSPHATE ACYLTRANSFERASE"/>
    <property type="match status" value="1"/>
</dbReference>
<dbReference type="Pfam" id="PF02504">
    <property type="entry name" value="FA_synthesis"/>
    <property type="match status" value="1"/>
</dbReference>
<dbReference type="PIRSF" id="PIRSF002465">
    <property type="entry name" value="Phsphlp_syn_PlsX"/>
    <property type="match status" value="1"/>
</dbReference>
<dbReference type="SUPFAM" id="SSF53659">
    <property type="entry name" value="Isocitrate/Isopropylmalate dehydrogenase-like"/>
    <property type="match status" value="1"/>
</dbReference>
<sequence>MKKIAVDAMGGDYAPQAIVEGVNQALSDFSDIEVQLYGDEAKIKQYLTATERVSIIHTDEKIDSDDEPTRAIRNKKNASMVLAAKAVKDGEADAVLSAGNTGALLAAGFFIVGRIKNIDRPGLMSTLPTVDGKGFDMLDLGANAENTAQHLHQYAVLGSFYAKNVRGIAQPRVGLLNNGTESSKGDPLRKETYELLAADESLNFIGNVEARDLMNGVADVVVADGFTGNAVLKSIEGTAMGIMGLLKTAITGGGLRAKLGALLLKDSLRGLKKQLNYSDVGGAVLFGVKAPVVKTHGSSDAKAVYSTIRQIRTMLETDVVAQTAREFSGE</sequence>
<gene>
    <name evidence="1" type="primary">plsX</name>
    <name type="ordered locus">spr0037</name>
</gene>
<proteinExistence type="evidence at protein level"/>
<reference key="1">
    <citation type="journal article" date="2001" name="J. Bacteriol.">
        <title>Genome of the bacterium Streptococcus pneumoniae strain R6.</title>
        <authorList>
            <person name="Hoskins J."/>
            <person name="Alborn W.E. Jr."/>
            <person name="Arnold J."/>
            <person name="Blaszczak L.C."/>
            <person name="Burgett S."/>
            <person name="DeHoff B.S."/>
            <person name="Estrem S.T."/>
            <person name="Fritz L."/>
            <person name="Fu D.-J."/>
            <person name="Fuller W."/>
            <person name="Geringer C."/>
            <person name="Gilmour R."/>
            <person name="Glass J.S."/>
            <person name="Khoja H."/>
            <person name="Kraft A.R."/>
            <person name="Lagace R.E."/>
            <person name="LeBlanc D.J."/>
            <person name="Lee L.N."/>
            <person name="Lefkowitz E.J."/>
            <person name="Lu J."/>
            <person name="Matsushima P."/>
            <person name="McAhren S.M."/>
            <person name="McHenney M."/>
            <person name="McLeaster K."/>
            <person name="Mundy C.W."/>
            <person name="Nicas T.I."/>
            <person name="Norris F.H."/>
            <person name="O'Gara M."/>
            <person name="Peery R.B."/>
            <person name="Robertson G.T."/>
            <person name="Rockey P."/>
            <person name="Sun P.-M."/>
            <person name="Winkler M.E."/>
            <person name="Yang Y."/>
            <person name="Young-Bellido M."/>
            <person name="Zhao G."/>
            <person name="Zook C.A."/>
            <person name="Baltz R.H."/>
            <person name="Jaskunas S.R."/>
            <person name="Rosteck P.R. Jr."/>
            <person name="Skatrud P.L."/>
            <person name="Glass J.I."/>
        </authorList>
    </citation>
    <scope>NUCLEOTIDE SEQUENCE [LARGE SCALE GENOMIC DNA]</scope>
    <source>
        <strain>ATCC BAA-255 / R6</strain>
    </source>
</reference>
<reference key="2">
    <citation type="journal article" date="2006" name="Mol. Cell">
        <title>Acyl-phosphates initiate membrane phospholipid synthesis in Gram-positive pathogens.</title>
        <authorList>
            <person name="Lu Y.-J."/>
            <person name="Zhang Y.-M."/>
            <person name="Grimes K.D."/>
            <person name="Qi J."/>
            <person name="Lee R.E."/>
            <person name="Rock C.O."/>
        </authorList>
    </citation>
    <scope>FUNCTION</scope>
    <scope>CATALYTIC ACTIVITY</scope>
    <scope>SUBUNIT</scope>
    <scope>ACTIVITY REGULATION</scope>
    <scope>BIOPHYSICOCHEMICAL PROPERTIES</scope>
</reference>
<evidence type="ECO:0000255" key="1">
    <source>
        <dbReference type="HAMAP-Rule" id="MF_00019"/>
    </source>
</evidence>
<evidence type="ECO:0000269" key="2">
    <source>
    </source>
</evidence>
<evidence type="ECO:0000305" key="3"/>
<organism>
    <name type="scientific">Streptococcus pneumoniae (strain ATCC BAA-255 / R6)</name>
    <dbReference type="NCBI Taxonomy" id="171101"/>
    <lineage>
        <taxon>Bacteria</taxon>
        <taxon>Bacillati</taxon>
        <taxon>Bacillota</taxon>
        <taxon>Bacilli</taxon>
        <taxon>Lactobacillales</taxon>
        <taxon>Streptococcaceae</taxon>
        <taxon>Streptococcus</taxon>
    </lineage>
</organism>
<keyword id="KW-0963">Cytoplasm</keyword>
<keyword id="KW-0444">Lipid biosynthesis</keyword>
<keyword id="KW-0443">Lipid metabolism</keyword>
<keyword id="KW-0594">Phospholipid biosynthesis</keyword>
<keyword id="KW-1208">Phospholipid metabolism</keyword>
<keyword id="KW-1185">Reference proteome</keyword>
<keyword id="KW-0808">Transferase</keyword>
<accession>Q8DRN3</accession>
<name>PLSX_STRR6</name>
<comment type="function">
    <text evidence="1 2">Catalyzes the reversible formation of acyl-phosphate (acyl-PO(4)) from acyl-[acyl-carrier-protein] (acyl-ACP). This enzyme utilizes acyl-ACP as fatty acyl donor, but not acyl-CoA. It is active with both saturated and unsaturated acyl-ACP.</text>
</comment>
<comment type="catalytic activity">
    <reaction evidence="1 2">
        <text>a fatty acyl-[ACP] + phosphate = an acyl phosphate + holo-[ACP]</text>
        <dbReference type="Rhea" id="RHEA:42292"/>
        <dbReference type="Rhea" id="RHEA-COMP:9685"/>
        <dbReference type="Rhea" id="RHEA-COMP:14125"/>
        <dbReference type="ChEBI" id="CHEBI:43474"/>
        <dbReference type="ChEBI" id="CHEBI:59918"/>
        <dbReference type="ChEBI" id="CHEBI:64479"/>
        <dbReference type="ChEBI" id="CHEBI:138651"/>
        <dbReference type="EC" id="2.3.1.274"/>
    </reaction>
</comment>
<comment type="catalytic activity">
    <reaction evidence="2">
        <text>hexadecanoyl-[ACP] + phosphate = hexadecanoyl phosphate + holo-[ACP]</text>
        <dbReference type="Rhea" id="RHEA:54964"/>
        <dbReference type="Rhea" id="RHEA-COMP:9652"/>
        <dbReference type="Rhea" id="RHEA-COMP:9685"/>
        <dbReference type="ChEBI" id="CHEBI:43474"/>
        <dbReference type="ChEBI" id="CHEBI:64479"/>
        <dbReference type="ChEBI" id="CHEBI:78483"/>
        <dbReference type="ChEBI" id="CHEBI:138436"/>
    </reaction>
    <physiologicalReaction direction="left-to-right" evidence="2">
        <dbReference type="Rhea" id="RHEA:54965"/>
    </physiologicalReaction>
</comment>
<comment type="activity regulation">
    <text evidence="2">Magnesium ions lead to a slight increase in the catalytic activity.</text>
</comment>
<comment type="biophysicochemical properties">
    <kinetics>
        <KM evidence="2">140 uM for orthophosphate</KM>
        <KM evidence="2">300 uM for acyl-ACP</KM>
    </kinetics>
</comment>
<comment type="pathway">
    <text evidence="1">Lipid metabolism; phospholipid metabolism.</text>
</comment>
<comment type="subunit">
    <text evidence="1">Homodimer. Probably interacts with PlsY.</text>
</comment>
<comment type="subcellular location">
    <subcellularLocation>
        <location>Cytoplasm</location>
    </subcellularLocation>
    <text evidence="3">Associated with the membrane possibly through PlsY.</text>
</comment>
<comment type="similarity">
    <text evidence="1">Belongs to the PlsX family.</text>
</comment>
<protein>
    <recommendedName>
        <fullName evidence="1">Phosphate acyltransferase</fullName>
        <ecNumber evidence="1 2">2.3.1.274</ecNumber>
    </recommendedName>
    <alternativeName>
        <fullName evidence="1">Acyl-ACP phosphotransacylase</fullName>
    </alternativeName>
    <alternativeName>
        <fullName evidence="1">Acyl-[acyl-carrier-protein]--phosphate acyltransferase</fullName>
    </alternativeName>
    <alternativeName>
        <fullName evidence="1">Phosphate-acyl-ACP acyltransferase</fullName>
    </alternativeName>
</protein>